<dbReference type="EC" id="1.1.1.6" evidence="3"/>
<dbReference type="EMBL" id="U09771">
    <property type="protein sequence ID" value="AAB48844.1"/>
    <property type="molecule type" value="Genomic_DNA"/>
</dbReference>
<dbReference type="SMR" id="P45511"/>
<dbReference type="STRING" id="1333848.CFNIH1_02640"/>
<dbReference type="BioCyc" id="MetaCyc:MONOMER-4503"/>
<dbReference type="SABIO-RK" id="P45511"/>
<dbReference type="UniPathway" id="UPA00617">
    <property type="reaction ID" value="UER00668"/>
</dbReference>
<dbReference type="GO" id="GO:0005829">
    <property type="term" value="C:cytosol"/>
    <property type="evidence" value="ECO:0007669"/>
    <property type="project" value="TreeGrafter"/>
</dbReference>
<dbReference type="GO" id="GO:0008888">
    <property type="term" value="F:glycerol dehydrogenase (NAD+) activity"/>
    <property type="evidence" value="ECO:0007669"/>
    <property type="project" value="UniProtKB-EC"/>
</dbReference>
<dbReference type="GO" id="GO:0046872">
    <property type="term" value="F:metal ion binding"/>
    <property type="evidence" value="ECO:0007669"/>
    <property type="project" value="UniProtKB-KW"/>
</dbReference>
<dbReference type="GO" id="GO:0019588">
    <property type="term" value="P:anaerobic glycerol catabolic process"/>
    <property type="evidence" value="ECO:0007669"/>
    <property type="project" value="UniProtKB-UniPathway"/>
</dbReference>
<dbReference type="CDD" id="cd08170">
    <property type="entry name" value="GlyDH"/>
    <property type="match status" value="1"/>
</dbReference>
<dbReference type="FunFam" id="1.20.1090.10:FF:000004">
    <property type="entry name" value="Glycerol dehydrogenase"/>
    <property type="match status" value="1"/>
</dbReference>
<dbReference type="FunFam" id="3.40.50.1970:FF:000005">
    <property type="entry name" value="Glycerol dehydrogenase"/>
    <property type="match status" value="1"/>
</dbReference>
<dbReference type="Gene3D" id="3.40.50.1970">
    <property type="match status" value="1"/>
</dbReference>
<dbReference type="Gene3D" id="1.20.1090.10">
    <property type="entry name" value="Dehydroquinate synthase-like - alpha domain"/>
    <property type="match status" value="1"/>
</dbReference>
<dbReference type="InterPro" id="IPR001670">
    <property type="entry name" value="ADH_Fe/GldA"/>
</dbReference>
<dbReference type="InterPro" id="IPR018211">
    <property type="entry name" value="ADH_Fe_CS"/>
</dbReference>
<dbReference type="InterPro" id="IPR016205">
    <property type="entry name" value="Glycerol_DH"/>
</dbReference>
<dbReference type="NCBIfam" id="NF006941">
    <property type="entry name" value="PRK09423.1"/>
    <property type="match status" value="1"/>
</dbReference>
<dbReference type="PANTHER" id="PTHR43616">
    <property type="entry name" value="GLYCEROL DEHYDROGENASE"/>
    <property type="match status" value="1"/>
</dbReference>
<dbReference type="PANTHER" id="PTHR43616:SF5">
    <property type="entry name" value="GLYCEROL DEHYDROGENASE 1"/>
    <property type="match status" value="1"/>
</dbReference>
<dbReference type="Pfam" id="PF00465">
    <property type="entry name" value="Fe-ADH"/>
    <property type="match status" value="1"/>
</dbReference>
<dbReference type="PIRSF" id="PIRSF000112">
    <property type="entry name" value="Glycerol_dehydrogenase"/>
    <property type="match status" value="1"/>
</dbReference>
<dbReference type="SUPFAM" id="SSF56796">
    <property type="entry name" value="Dehydroquinate synthase-like"/>
    <property type="match status" value="1"/>
</dbReference>
<dbReference type="PROSITE" id="PS00913">
    <property type="entry name" value="ADH_IRON_1"/>
    <property type="match status" value="1"/>
</dbReference>
<dbReference type="PROSITE" id="PS00060">
    <property type="entry name" value="ADH_IRON_2"/>
    <property type="match status" value="1"/>
</dbReference>
<proteinExistence type="evidence at protein level"/>
<keyword id="KW-0903">Direct protein sequencing</keyword>
<keyword id="KW-0319">Glycerol metabolism</keyword>
<keyword id="KW-0464">Manganese</keyword>
<keyword id="KW-0479">Metal-binding</keyword>
<keyword id="KW-0520">NAD</keyword>
<keyword id="KW-0560">Oxidoreductase</keyword>
<comment type="function">
    <text evidence="3">Catalyzes the NAD-dependent oxidation of glycerol to dihydroxyacetone (glycerone). Allows microorganisms to utilize glycerol as a source of carbon under anaerobic conditions. Exhibits a rather broad substrate specificity since it can also oxidize 1,2-propanediol and 2,3-butanediol and reduce dihydroxyacetone. Cannot use NADP(+) as an electron acceptor for the oxidation of glycerol.</text>
</comment>
<comment type="catalytic activity">
    <reaction evidence="3">
        <text>glycerol + NAD(+) = dihydroxyacetone + NADH + H(+)</text>
        <dbReference type="Rhea" id="RHEA:13769"/>
        <dbReference type="ChEBI" id="CHEBI:15378"/>
        <dbReference type="ChEBI" id="CHEBI:16016"/>
        <dbReference type="ChEBI" id="CHEBI:17754"/>
        <dbReference type="ChEBI" id="CHEBI:57540"/>
        <dbReference type="ChEBI" id="CHEBI:57945"/>
        <dbReference type="EC" id="1.1.1.6"/>
    </reaction>
</comment>
<comment type="catalytic activity">
    <reaction evidence="3">
        <text>hydroxyacetone + NADH + H(+) = (S)-propane-1,2-diol + NAD(+)</text>
        <dbReference type="Rhea" id="RHEA:28667"/>
        <dbReference type="ChEBI" id="CHEBI:15378"/>
        <dbReference type="ChEBI" id="CHEBI:27957"/>
        <dbReference type="ChEBI" id="CHEBI:29002"/>
        <dbReference type="ChEBI" id="CHEBI:57540"/>
        <dbReference type="ChEBI" id="CHEBI:57945"/>
    </reaction>
</comment>
<comment type="cofactor">
    <cofactor evidence="6">
        <name>Mn(2+)</name>
        <dbReference type="ChEBI" id="CHEBI:29035"/>
    </cofactor>
</comment>
<comment type="activity regulation">
    <text evidence="3">Inhibited by zinc.</text>
</comment>
<comment type="biophysicochemical properties">
    <kinetics>
        <KM evidence="3">1.27 mM for glycerol</KM>
        <KM evidence="3">57 uM for NAD(+)</KM>
    </kinetics>
</comment>
<comment type="pathway">
    <text>Polyol metabolism; glycerol fermentation; glycerone phosphate from glycerol (oxidative route): step 1/2.</text>
</comment>
<comment type="subunit">
    <text evidence="3">Homohexamer.</text>
</comment>
<comment type="similarity">
    <text evidence="5">Belongs to the iron-containing alcohol dehydrogenase family.</text>
</comment>
<name>GLDA_CITFR</name>
<organism>
    <name type="scientific">Citrobacter freundii</name>
    <dbReference type="NCBI Taxonomy" id="546"/>
    <lineage>
        <taxon>Bacteria</taxon>
        <taxon>Pseudomonadati</taxon>
        <taxon>Pseudomonadota</taxon>
        <taxon>Gammaproteobacteria</taxon>
        <taxon>Enterobacterales</taxon>
        <taxon>Enterobacteriaceae</taxon>
        <taxon>Citrobacter</taxon>
        <taxon>Citrobacter freundii complex</taxon>
    </lineage>
</organism>
<feature type="chain" id="PRO_0000087827" description="Glycerol dehydrogenase">
    <location>
        <begin position="1"/>
        <end position="365"/>
    </location>
</feature>
<feature type="binding site" evidence="2">
    <location>
        <position position="37"/>
    </location>
    <ligand>
        <name>NAD(+)</name>
        <dbReference type="ChEBI" id="CHEBI:57540"/>
    </ligand>
</feature>
<feature type="binding site" evidence="2">
    <location>
        <position position="94"/>
    </location>
    <ligand>
        <name>NAD(+)</name>
        <dbReference type="ChEBI" id="CHEBI:57540"/>
    </ligand>
</feature>
<feature type="binding site" evidence="2">
    <location>
        <position position="95"/>
    </location>
    <ligand>
        <name>NAD(+)</name>
        <dbReference type="ChEBI" id="CHEBI:57540"/>
    </ligand>
</feature>
<feature type="binding site" evidence="2">
    <location>
        <position position="116"/>
    </location>
    <ligand>
        <name>NAD(+)</name>
        <dbReference type="ChEBI" id="CHEBI:57540"/>
    </ligand>
</feature>
<feature type="binding site" evidence="2">
    <location>
        <position position="119"/>
    </location>
    <ligand>
        <name>NAD(+)</name>
        <dbReference type="ChEBI" id="CHEBI:57540"/>
    </ligand>
</feature>
<feature type="binding site" evidence="1">
    <location>
        <position position="121"/>
    </location>
    <ligand>
        <name>glycerol</name>
        <dbReference type="ChEBI" id="CHEBI:17754"/>
    </ligand>
</feature>
<feature type="binding site" evidence="2">
    <location>
        <position position="125"/>
    </location>
    <ligand>
        <name>NAD(+)</name>
        <dbReference type="ChEBI" id="CHEBI:57540"/>
    </ligand>
</feature>
<feature type="binding site" evidence="2">
    <location>
        <position position="127"/>
    </location>
    <ligand>
        <name>NAD(+)</name>
        <dbReference type="ChEBI" id="CHEBI:57540"/>
    </ligand>
</feature>
<feature type="binding site" evidence="2">
    <location>
        <position position="131"/>
    </location>
    <ligand>
        <name>NAD(+)</name>
        <dbReference type="ChEBI" id="CHEBI:57540"/>
    </ligand>
</feature>
<feature type="binding site" evidence="1">
    <location>
        <position position="171"/>
    </location>
    <ligand>
        <name>Mn(2+)</name>
        <dbReference type="ChEBI" id="CHEBI:29035"/>
        <note>catalytic</note>
    </ligand>
</feature>
<feature type="binding site" evidence="1">
    <location>
        <position position="254"/>
    </location>
    <ligand>
        <name>glycerol</name>
        <dbReference type="ChEBI" id="CHEBI:17754"/>
    </ligand>
</feature>
<feature type="binding site" evidence="1">
    <location>
        <position position="254"/>
    </location>
    <ligand>
        <name>Mn(2+)</name>
        <dbReference type="ChEBI" id="CHEBI:29035"/>
        <note>catalytic</note>
    </ligand>
</feature>
<feature type="binding site" evidence="1">
    <location>
        <position position="271"/>
    </location>
    <ligand>
        <name>Mn(2+)</name>
        <dbReference type="ChEBI" id="CHEBI:29035"/>
        <note>catalytic</note>
    </ligand>
</feature>
<gene>
    <name evidence="4" type="primary">dhaD</name>
</gene>
<sequence length="365" mass="39019">MLKVIQSPAKYLQGPDASTLFGQYAKNLADSFFVIADDFVMKLAGEKVLNGLHSHDISCHAERFNGECSHIEINRLIAILKQHGCRGVVGIGGGKTLDTAKAIGYYQKLPVVVIPTIASTDAPTSALSVIYTEAGEFEEYLIYPKNPDMVVMDTAIIAKAPVRLLVAGMGDALSTWFEAKACYDARATSMAGGQSTVAALSLARLCYDTLLAEGEKARFAAQAGVVTDALERIVEANTYLSGIGFESSGLAGAHAIHNGFTILEECHHLYHGEKVAFGTLAQLVLQNSPMEEIETVLNFCQKVGLPVTLAEMGVKDDIDGKIMAVAKATCAEGETIHNMPFSVTPESVHAAILTADLLGQQWLAR</sequence>
<protein>
    <recommendedName>
        <fullName evidence="4">Glycerol dehydrogenase</fullName>
        <shortName>GDH</shortName>
        <shortName>GLDH</shortName>
        <ecNumber evidence="3">1.1.1.6</ecNumber>
    </recommendedName>
</protein>
<accession>P45511</accession>
<reference key="1">
    <citation type="journal article" date="1995" name="J. Bacteriol.">
        <title>Biochemical and molecular characterization of the oxidative branch of glycerol utilization by Citrobacter freundii.</title>
        <authorList>
            <person name="Daniel R."/>
            <person name="Stuertz K."/>
            <person name="Gottschalk G."/>
        </authorList>
    </citation>
    <scope>NUCLEOTIDE SEQUENCE [GENOMIC DNA]</scope>
    <scope>PROTEIN SEQUENCE OF 1-30</scope>
    <scope>FUNCTION</scope>
    <scope>CATALYTIC ACTIVITY</scope>
    <scope>COFACTOR</scope>
    <scope>ACTIVITY REGULATION</scope>
    <scope>BIOPHYSICOCHEMICAL PROPERTIES</scope>
    <scope>SUBUNIT</scope>
    <source>
        <strain>ATCC 6750 / DSM 30040 / NCIB 8173 / M8BK</strain>
    </source>
</reference>
<evidence type="ECO:0000250" key="1">
    <source>
        <dbReference type="UniProtKB" id="P0A9S5"/>
    </source>
</evidence>
<evidence type="ECO:0000250" key="2">
    <source>
        <dbReference type="UniProtKB" id="P32816"/>
    </source>
</evidence>
<evidence type="ECO:0000269" key="3">
    <source>
    </source>
</evidence>
<evidence type="ECO:0000303" key="4">
    <source>
    </source>
</evidence>
<evidence type="ECO:0000305" key="5"/>
<evidence type="ECO:0000305" key="6">
    <source>
    </source>
</evidence>